<evidence type="ECO:0000250" key="1">
    <source>
        <dbReference type="UniProtKB" id="C3VD30"/>
    </source>
</evidence>
<evidence type="ECO:0000250" key="2">
    <source>
        <dbReference type="UniProtKB" id="Q80SU3"/>
    </source>
</evidence>
<evidence type="ECO:0000255" key="3"/>
<evidence type="ECO:0000256" key="4">
    <source>
        <dbReference type="SAM" id="MobiDB-lite"/>
    </source>
</evidence>
<evidence type="ECO:0000303" key="5">
    <source>
    </source>
</evidence>
<evidence type="ECO:0000305" key="6"/>
<reference key="1">
    <citation type="journal article" date="2003" name="Biol. Reprod.">
        <title>Zygote arrest 1 (Zar1) is an evolutionarily conserved gene expressed in vertebrate ovaries.</title>
        <authorList>
            <person name="Wu X."/>
            <person name="Wang P."/>
            <person name="Brown C.A."/>
            <person name="Zilinski C.A."/>
            <person name="Matzuk M.M."/>
        </authorList>
    </citation>
    <scope>NUCLEOTIDE SEQUENCE [MRNA]</scope>
</reference>
<sequence length="320" mass="36796">MATYCDEPVDSYFYSSYNPYMGRYPRHRDAGWKYKSYLSHYGDTSEAFSNQQRAQLKSILSQINPKLTPRLRKANTKDVAVQVNPKRDASVQCSIGPRTLLVVKRELRRRRKLNPGPPGTPQKTEGEVRYPRTLAVYSPIAFRSVTSFLVETGKDRPAAEAQAEELPGEQPEQKGGENQAGEETNANLPEQRKPQSEDAQTAADAEGSKGKARVRFQFLEQKYGYYHCRECNLRWESAYVWCVQGTNKVYFKQFCRKCQKDFNPYRVEDITCHVCNKARCACAETQRHVDPKRPHRQDLCGRCKGKRLSCDSTFSFKYIV</sequence>
<protein>
    <recommendedName>
        <fullName evidence="5">Zygote arrest protein 1</fullName>
    </recommendedName>
</protein>
<name>ZAR1_TAKRU</name>
<keyword id="KW-0963">Cytoplasm</keyword>
<keyword id="KW-0217">Developmental protein</keyword>
<keyword id="KW-0221">Differentiation</keyword>
<keyword id="KW-0479">Metal-binding</keyword>
<keyword id="KW-0896">Oogenesis</keyword>
<keyword id="KW-1185">Reference proteome</keyword>
<keyword id="KW-0694">RNA-binding</keyword>
<keyword id="KW-0862">Zinc</keyword>
<keyword id="KW-0863">Zinc-finger</keyword>
<organism>
    <name type="scientific">Takifugu rubripes</name>
    <name type="common">Japanese pufferfish</name>
    <name type="synonym">Fugu rubripes</name>
    <dbReference type="NCBI Taxonomy" id="31033"/>
    <lineage>
        <taxon>Eukaryota</taxon>
        <taxon>Metazoa</taxon>
        <taxon>Chordata</taxon>
        <taxon>Craniata</taxon>
        <taxon>Vertebrata</taxon>
        <taxon>Euteleostomi</taxon>
        <taxon>Actinopterygii</taxon>
        <taxon>Neopterygii</taxon>
        <taxon>Teleostei</taxon>
        <taxon>Neoteleostei</taxon>
        <taxon>Acanthomorphata</taxon>
        <taxon>Eupercaria</taxon>
        <taxon>Tetraodontiformes</taxon>
        <taxon>Tetradontoidea</taxon>
        <taxon>Tetraodontidae</taxon>
        <taxon>Takifugu</taxon>
    </lineage>
</organism>
<feature type="chain" id="PRO_0000187015" description="Zygote arrest protein 1">
    <location>
        <begin position="1"/>
        <end position="320"/>
    </location>
</feature>
<feature type="zinc finger region" description="3CxxC-type" evidence="3">
    <location>
        <begin position="222"/>
        <end position="305"/>
    </location>
</feature>
<feature type="region of interest" description="Disordered" evidence="4">
    <location>
        <begin position="106"/>
        <end position="130"/>
    </location>
</feature>
<feature type="region of interest" description="Disordered" evidence="4">
    <location>
        <begin position="155"/>
        <end position="208"/>
    </location>
</feature>
<dbReference type="EMBL" id="AY283177">
    <property type="protein sequence ID" value="AAP37039.1"/>
    <property type="molecule type" value="mRNA"/>
</dbReference>
<dbReference type="RefSeq" id="NP_001027939.1">
    <property type="nucleotide sequence ID" value="NM_001032767.1"/>
</dbReference>
<dbReference type="FunCoup" id="Q7T3T9">
    <property type="interactions" value="1062"/>
</dbReference>
<dbReference type="STRING" id="31033.ENSTRUP00000048558"/>
<dbReference type="GeneID" id="446008"/>
<dbReference type="KEGG" id="tru:446008"/>
<dbReference type="CTD" id="326340"/>
<dbReference type="InParanoid" id="Q7T3T9"/>
<dbReference type="OrthoDB" id="9885288at2759"/>
<dbReference type="Proteomes" id="UP000005226">
    <property type="component" value="Unplaced"/>
</dbReference>
<dbReference type="GO" id="GO:0036464">
    <property type="term" value="C:cytoplasmic ribonucleoprotein granule"/>
    <property type="evidence" value="ECO:0007669"/>
    <property type="project" value="UniProtKB-SubCell"/>
</dbReference>
<dbReference type="GO" id="GO:0003729">
    <property type="term" value="F:mRNA binding"/>
    <property type="evidence" value="ECO:0007669"/>
    <property type="project" value="UniProtKB-ARBA"/>
</dbReference>
<dbReference type="GO" id="GO:0008270">
    <property type="term" value="F:zinc ion binding"/>
    <property type="evidence" value="ECO:0007669"/>
    <property type="project" value="UniProtKB-KW"/>
</dbReference>
<dbReference type="GO" id="GO:0017148">
    <property type="term" value="P:negative regulation of translation"/>
    <property type="evidence" value="ECO:0007669"/>
    <property type="project" value="UniProtKB-ARBA"/>
</dbReference>
<dbReference type="GO" id="GO:0048477">
    <property type="term" value="P:oogenesis"/>
    <property type="evidence" value="ECO:0007669"/>
    <property type="project" value="UniProtKB-KW"/>
</dbReference>
<dbReference type="GO" id="GO:0006412">
    <property type="term" value="P:translation"/>
    <property type="evidence" value="ECO:0007669"/>
    <property type="project" value="TreeGrafter"/>
</dbReference>
<dbReference type="InterPro" id="IPR026775">
    <property type="entry name" value="Zar1"/>
</dbReference>
<dbReference type="InterPro" id="IPR027377">
    <property type="entry name" value="ZAR1/RTP1-5-like_Znf-3CxxC"/>
</dbReference>
<dbReference type="PANTHER" id="PTHR31054:SF6">
    <property type="entry name" value="ZYGOTE ARREST PROTEIN 1"/>
    <property type="match status" value="1"/>
</dbReference>
<dbReference type="PANTHER" id="PTHR31054">
    <property type="entry name" value="ZYGOTE ARREST PROTEIN 1-LIKE ISOFORM X1"/>
    <property type="match status" value="1"/>
</dbReference>
<dbReference type="Pfam" id="PF13695">
    <property type="entry name" value="Zn_ribbon_3CxxC"/>
    <property type="match status" value="1"/>
</dbReference>
<dbReference type="SMART" id="SM01328">
    <property type="entry name" value="zf-3CxxC"/>
    <property type="match status" value="1"/>
</dbReference>
<proteinExistence type="evidence at transcript level"/>
<comment type="function">
    <text evidence="1 2">mRNA-binding protein required for maternal mRNA storage, translation and degradation during oocyte maturation (By similarity). Probably promotes formation of some phase-separated membraneless compartment that stores maternal mRNAs in oocytes: acts by undergoing liquid-liquid phase separation upon binding to maternal mRNAs (By similarity). Binds to the 3'-UTR of maternal mRNAs, inhibiting their translation (By similarity).</text>
</comment>
<comment type="subcellular location">
    <subcellularLocation>
        <location evidence="1">Cytoplasm</location>
        <location evidence="1">Cytoplasmic ribonucleoprotein granule</location>
    </subcellularLocation>
</comment>
<comment type="domain">
    <text evidence="2">Disordered regions undergo liquid-liquid phase separation (LLPS) for the formation of membraneless compartments that store maternal mRNAs in oocytes.</text>
</comment>
<comment type="domain">
    <text evidence="1">The 3CxxC-type mediates binding to the 3'-UTR of mRNAs.</text>
</comment>
<comment type="similarity">
    <text evidence="6">Belongs to the ZAR1 family.</text>
</comment>
<accession>Q7T3T9</accession>
<gene>
    <name evidence="5" type="primary">zar1</name>
</gene>